<dbReference type="EC" id="2.2.1.2" evidence="2"/>
<dbReference type="EMBL" id="CP000884">
    <property type="protein sequence ID" value="ABX38303.1"/>
    <property type="molecule type" value="Genomic_DNA"/>
</dbReference>
<dbReference type="RefSeq" id="WP_012207472.1">
    <property type="nucleotide sequence ID" value="NC_010002.1"/>
</dbReference>
<dbReference type="SMR" id="A9BXM7"/>
<dbReference type="STRING" id="398578.Daci_5675"/>
<dbReference type="GeneID" id="24114222"/>
<dbReference type="KEGG" id="dac:Daci_5675"/>
<dbReference type="eggNOG" id="COG0176">
    <property type="taxonomic scope" value="Bacteria"/>
</dbReference>
<dbReference type="HOGENOM" id="CLU_047470_0_1_4"/>
<dbReference type="UniPathway" id="UPA00115">
    <property type="reaction ID" value="UER00414"/>
</dbReference>
<dbReference type="Proteomes" id="UP000000784">
    <property type="component" value="Chromosome"/>
</dbReference>
<dbReference type="GO" id="GO:0005737">
    <property type="term" value="C:cytoplasm"/>
    <property type="evidence" value="ECO:0007669"/>
    <property type="project" value="UniProtKB-SubCell"/>
</dbReference>
<dbReference type="GO" id="GO:0004801">
    <property type="term" value="F:transaldolase activity"/>
    <property type="evidence" value="ECO:0000250"/>
    <property type="project" value="UniProtKB"/>
</dbReference>
<dbReference type="GO" id="GO:0005975">
    <property type="term" value="P:carbohydrate metabolic process"/>
    <property type="evidence" value="ECO:0007669"/>
    <property type="project" value="InterPro"/>
</dbReference>
<dbReference type="GO" id="GO:0009052">
    <property type="term" value="P:pentose-phosphate shunt, non-oxidative branch"/>
    <property type="evidence" value="ECO:0007669"/>
    <property type="project" value="TreeGrafter"/>
</dbReference>
<dbReference type="CDD" id="cd00957">
    <property type="entry name" value="Transaldolase_TalAB"/>
    <property type="match status" value="1"/>
</dbReference>
<dbReference type="FunFam" id="3.20.20.70:FF:000002">
    <property type="entry name" value="Transaldolase"/>
    <property type="match status" value="1"/>
</dbReference>
<dbReference type="Gene3D" id="3.20.20.70">
    <property type="entry name" value="Aldolase class I"/>
    <property type="match status" value="1"/>
</dbReference>
<dbReference type="HAMAP" id="MF_00492">
    <property type="entry name" value="Transaldolase_1"/>
    <property type="match status" value="1"/>
</dbReference>
<dbReference type="InterPro" id="IPR013785">
    <property type="entry name" value="Aldolase_TIM"/>
</dbReference>
<dbReference type="InterPro" id="IPR001585">
    <property type="entry name" value="TAL/FSA"/>
</dbReference>
<dbReference type="InterPro" id="IPR004730">
    <property type="entry name" value="Transaldolase_1"/>
</dbReference>
<dbReference type="InterPro" id="IPR018225">
    <property type="entry name" value="Transaldolase_AS"/>
</dbReference>
<dbReference type="NCBIfam" id="TIGR00874">
    <property type="entry name" value="talAB"/>
    <property type="match status" value="1"/>
</dbReference>
<dbReference type="PANTHER" id="PTHR10683">
    <property type="entry name" value="TRANSALDOLASE"/>
    <property type="match status" value="1"/>
</dbReference>
<dbReference type="PANTHER" id="PTHR10683:SF18">
    <property type="entry name" value="TRANSALDOLASE"/>
    <property type="match status" value="1"/>
</dbReference>
<dbReference type="Pfam" id="PF00923">
    <property type="entry name" value="TAL_FSA"/>
    <property type="match status" value="1"/>
</dbReference>
<dbReference type="SUPFAM" id="SSF51569">
    <property type="entry name" value="Aldolase"/>
    <property type="match status" value="1"/>
</dbReference>
<dbReference type="PROSITE" id="PS01054">
    <property type="entry name" value="TRANSALDOLASE_1"/>
    <property type="match status" value="1"/>
</dbReference>
<dbReference type="PROSITE" id="PS00958">
    <property type="entry name" value="TRANSALDOLASE_2"/>
    <property type="match status" value="1"/>
</dbReference>
<keyword id="KW-0963">Cytoplasm</keyword>
<keyword id="KW-0570">Pentose shunt</keyword>
<keyword id="KW-1185">Reference proteome</keyword>
<keyword id="KW-0704">Schiff base</keyword>
<keyword id="KW-0808">Transferase</keyword>
<proteinExistence type="inferred from homology"/>
<gene>
    <name evidence="2" type="primary">tal</name>
    <name type="ordered locus">Daci_5675</name>
</gene>
<reference key="1">
    <citation type="submission" date="2007-11" db="EMBL/GenBank/DDBJ databases">
        <title>Complete sequence of Delftia acidovorans DSM 14801 / SPH-1.</title>
        <authorList>
            <person name="Copeland A."/>
            <person name="Lucas S."/>
            <person name="Lapidus A."/>
            <person name="Barry K."/>
            <person name="Glavina del Rio T."/>
            <person name="Dalin E."/>
            <person name="Tice H."/>
            <person name="Pitluck S."/>
            <person name="Lowry S."/>
            <person name="Clum A."/>
            <person name="Schmutz J."/>
            <person name="Larimer F."/>
            <person name="Land M."/>
            <person name="Hauser L."/>
            <person name="Kyrpides N."/>
            <person name="Kim E."/>
            <person name="Schleheck D."/>
            <person name="Richardson P."/>
        </authorList>
    </citation>
    <scope>NUCLEOTIDE SEQUENCE [LARGE SCALE GENOMIC DNA]</scope>
    <source>
        <strain>DSM 14801 / SPH-1</strain>
    </source>
</reference>
<feature type="chain" id="PRO_1000126245" description="Transaldolase">
    <location>
        <begin position="1"/>
        <end position="317"/>
    </location>
</feature>
<feature type="active site" description="Schiff-base intermediate with substrate" evidence="2">
    <location>
        <position position="125"/>
    </location>
</feature>
<protein>
    <recommendedName>
        <fullName evidence="2">Transaldolase</fullName>
        <ecNumber evidence="2">2.2.1.2</ecNumber>
    </recommendedName>
</protein>
<evidence type="ECO:0000250" key="1"/>
<evidence type="ECO:0000255" key="2">
    <source>
        <dbReference type="HAMAP-Rule" id="MF_00492"/>
    </source>
</evidence>
<organism>
    <name type="scientific">Delftia acidovorans (strain DSM 14801 / SPH-1)</name>
    <dbReference type="NCBI Taxonomy" id="398578"/>
    <lineage>
        <taxon>Bacteria</taxon>
        <taxon>Pseudomonadati</taxon>
        <taxon>Pseudomonadota</taxon>
        <taxon>Betaproteobacteria</taxon>
        <taxon>Burkholderiales</taxon>
        <taxon>Comamonadaceae</taxon>
        <taxon>Delftia</taxon>
    </lineage>
</organism>
<accession>A9BXM7</accession>
<comment type="function">
    <text evidence="2">Transaldolase is important for the balance of metabolites in the pentose-phosphate pathway.</text>
</comment>
<comment type="catalytic activity">
    <reaction evidence="2">
        <text>D-sedoheptulose 7-phosphate + D-glyceraldehyde 3-phosphate = D-erythrose 4-phosphate + beta-D-fructose 6-phosphate</text>
        <dbReference type="Rhea" id="RHEA:17053"/>
        <dbReference type="ChEBI" id="CHEBI:16897"/>
        <dbReference type="ChEBI" id="CHEBI:57483"/>
        <dbReference type="ChEBI" id="CHEBI:57634"/>
        <dbReference type="ChEBI" id="CHEBI:59776"/>
        <dbReference type="EC" id="2.2.1.2"/>
    </reaction>
</comment>
<comment type="pathway">
    <text evidence="2">Carbohydrate degradation; pentose phosphate pathway; D-glyceraldehyde 3-phosphate and beta-D-fructose 6-phosphate from D-ribose 5-phosphate and D-xylulose 5-phosphate (non-oxidative stage): step 2/3.</text>
</comment>
<comment type="subunit">
    <text evidence="1">Homodimer.</text>
</comment>
<comment type="subcellular location">
    <subcellularLocation>
        <location evidence="2">Cytoplasm</location>
    </subcellularLocation>
</comment>
<comment type="similarity">
    <text evidence="2">Belongs to the transaldolase family. Type 1 subfamily.</text>
</comment>
<name>TAL_DELAS</name>
<sequence length="317" mass="34842">MNQLDALRQYTTVVADTGDFHQLAQFQPRDATTNPSLILKAVQKPEYAPLMRATVAQYKGRSLDEVMDRMLVRFGCEILNTIPGRVSTEVDARLSFNTSATVARAERLIELYQAEGVHIDRVLIKIASTWEGIEAARQLELRGIHTNLTLLFSFCQAVACGQAKVQLISPFVGRIYDWYKKQAGAQWDEAAMAGANDPGVRSVRAIYEHYKHFGIATEVMGASFRNTGQIVALAGCDLLTIAPELLAQLGASDAPLSRALDPEAARTLELDPVHYDEAGFRLALNEDAMGTEKLAEGIRAFAADTRKLEALMQQAAD</sequence>